<comment type="subcellular location">
    <subcellularLocation>
        <location evidence="2">Cell membrane</location>
        <topology evidence="2">Single-pass membrane protein</topology>
    </subcellularLocation>
</comment>
<comment type="similarity">
    <text evidence="2">Belongs to the staphylococcal tandem lipoprotein family.</text>
</comment>
<name>Y186_STAAS</name>
<accession>Q6GCR5</accession>
<sequence length="257" mass="29647">MKAHKIFWLNLAAIIIISIVVSGGMFLAMKWEQIHLKDGLKKVLSTYPIKNLETLYEIDGHDNPHYENNDQDTWYIESSYSVVGSDELLKEDRMLLKVDKNTHKITGEYDTTTNDRKNATDSTYKSYPVKVVNNKIVFTKDVKDPALKQKIENNQFLIQSGDLTSILNSNDLKVTHDPTTDYYNLSGKLSNDNPNVKQLKRRYNIPRNASTKVELKGMSDLKGNNHQDQKLYFYFSSPGKDQIIYKESLTYNKLSEH</sequence>
<proteinExistence type="inferred from homology"/>
<protein>
    <recommendedName>
        <fullName>Uncharacterized protein SAS0186</fullName>
    </recommendedName>
</protein>
<dbReference type="EMBL" id="BX571857">
    <property type="protein sequence ID" value="CAG41954.1"/>
    <property type="molecule type" value="Genomic_DNA"/>
</dbReference>
<dbReference type="RefSeq" id="WP_000643623.1">
    <property type="nucleotide sequence ID" value="NC_002953.3"/>
</dbReference>
<dbReference type="SMR" id="Q6GCR5"/>
<dbReference type="KEGG" id="sas:SAS0186"/>
<dbReference type="HOGENOM" id="CLU_071589_0_1_9"/>
<dbReference type="GO" id="GO:0005886">
    <property type="term" value="C:plasma membrane"/>
    <property type="evidence" value="ECO:0007669"/>
    <property type="project" value="UniProtKB-SubCell"/>
</dbReference>
<dbReference type="Gene3D" id="2.50.20.40">
    <property type="match status" value="1"/>
</dbReference>
<dbReference type="InterPro" id="IPR007595">
    <property type="entry name" value="Csa"/>
</dbReference>
<dbReference type="InterPro" id="IPR038641">
    <property type="entry name" value="Csa_sf"/>
</dbReference>
<dbReference type="NCBIfam" id="TIGR01742">
    <property type="entry name" value="SA_tandem_lipo"/>
    <property type="match status" value="1"/>
</dbReference>
<dbReference type="Pfam" id="PF04507">
    <property type="entry name" value="DUF576"/>
    <property type="match status" value="1"/>
</dbReference>
<gene>
    <name type="ordered locus">SAS0186</name>
</gene>
<feature type="chain" id="PRO_0000282162" description="Uncharacterized protein SAS0186">
    <location>
        <begin position="1"/>
        <end position="257"/>
    </location>
</feature>
<feature type="transmembrane region" description="Helical" evidence="1">
    <location>
        <begin position="6"/>
        <end position="26"/>
    </location>
</feature>
<evidence type="ECO:0000255" key="1"/>
<evidence type="ECO:0000305" key="2"/>
<reference key="1">
    <citation type="journal article" date="2004" name="Proc. Natl. Acad. Sci. U.S.A.">
        <title>Complete genomes of two clinical Staphylococcus aureus strains: evidence for the rapid evolution of virulence and drug resistance.</title>
        <authorList>
            <person name="Holden M.T.G."/>
            <person name="Feil E.J."/>
            <person name="Lindsay J.A."/>
            <person name="Peacock S.J."/>
            <person name="Day N.P.J."/>
            <person name="Enright M.C."/>
            <person name="Foster T.J."/>
            <person name="Moore C.E."/>
            <person name="Hurst L."/>
            <person name="Atkin R."/>
            <person name="Barron A."/>
            <person name="Bason N."/>
            <person name="Bentley S.D."/>
            <person name="Chillingworth C."/>
            <person name="Chillingworth T."/>
            <person name="Churcher C."/>
            <person name="Clark L."/>
            <person name="Corton C."/>
            <person name="Cronin A."/>
            <person name="Doggett J."/>
            <person name="Dowd L."/>
            <person name="Feltwell T."/>
            <person name="Hance Z."/>
            <person name="Harris B."/>
            <person name="Hauser H."/>
            <person name="Holroyd S."/>
            <person name="Jagels K."/>
            <person name="James K.D."/>
            <person name="Lennard N."/>
            <person name="Line A."/>
            <person name="Mayes R."/>
            <person name="Moule S."/>
            <person name="Mungall K."/>
            <person name="Ormond D."/>
            <person name="Quail M.A."/>
            <person name="Rabbinowitsch E."/>
            <person name="Rutherford K.M."/>
            <person name="Sanders M."/>
            <person name="Sharp S."/>
            <person name="Simmonds M."/>
            <person name="Stevens K."/>
            <person name="Whitehead S."/>
            <person name="Barrell B.G."/>
            <person name="Spratt B.G."/>
            <person name="Parkhill J."/>
        </authorList>
    </citation>
    <scope>NUCLEOTIDE SEQUENCE [LARGE SCALE GENOMIC DNA]</scope>
    <source>
        <strain>MSSA476</strain>
    </source>
</reference>
<keyword id="KW-1003">Cell membrane</keyword>
<keyword id="KW-0472">Membrane</keyword>
<keyword id="KW-0812">Transmembrane</keyword>
<keyword id="KW-1133">Transmembrane helix</keyword>
<organism>
    <name type="scientific">Staphylococcus aureus (strain MSSA476)</name>
    <dbReference type="NCBI Taxonomy" id="282459"/>
    <lineage>
        <taxon>Bacteria</taxon>
        <taxon>Bacillati</taxon>
        <taxon>Bacillota</taxon>
        <taxon>Bacilli</taxon>
        <taxon>Bacillales</taxon>
        <taxon>Staphylococcaceae</taxon>
        <taxon>Staphylococcus</taxon>
    </lineage>
</organism>